<proteinExistence type="evidence at protein level"/>
<gene>
    <name type="primary">RACK1</name>
    <name type="synonym">GNB2L1</name>
</gene>
<sequence>MTEQMTLRGTLKGHNGWVTQIATTPQFPDMILSASRDKTIIMWKLTRDETNYGIPQRALRGHSHFVSDVVISSDGQFALSGSWDGTLRLWDLTTGTTTRRFVGHTKDVLSVAFSSDNRQIVSGSRDKTIKLWNTLGVCKYTVQDESHSEWVSCVRFSPNSSNPIIVSCGWDKLVKVWNLANCKLKTNHIGHTGYLNTVTVSPDGSLCASGGKDGQAMLWDLNEGKHLYTLDGGDIINALCFSPNRYWLCAATGPSIKIWDLEGKIIVDELKQEVISTSSKAEPPQCTSLAWSADGQTLFAGYTDNLVRVWQVTIGTR</sequence>
<keyword id="KW-0002">3D-structure</keyword>
<keyword id="KW-0007">Acetylation</keyword>
<keyword id="KW-0053">Apoptosis</keyword>
<keyword id="KW-0090">Biological rhythms</keyword>
<keyword id="KW-0131">Cell cycle</keyword>
<keyword id="KW-1003">Cell membrane</keyword>
<keyword id="KW-0966">Cell projection</keyword>
<keyword id="KW-0963">Cytoplasm</keyword>
<keyword id="KW-0217">Developmental protein</keyword>
<keyword id="KW-0306">Gastrulation</keyword>
<keyword id="KW-0341">Growth regulation</keyword>
<keyword id="KW-0472">Membrane</keyword>
<keyword id="KW-0539">Nucleus</keyword>
<keyword id="KW-0597">Phosphoprotein</keyword>
<keyword id="KW-1185">Reference proteome</keyword>
<keyword id="KW-0677">Repeat</keyword>
<keyword id="KW-0687">Ribonucleoprotein</keyword>
<keyword id="KW-0689">Ribosomal protein</keyword>
<keyword id="KW-0810">Translation regulation</keyword>
<keyword id="KW-0853">WD repeat</keyword>
<evidence type="ECO:0000250" key="1"/>
<evidence type="ECO:0000250" key="2">
    <source>
        <dbReference type="UniProtKB" id="P63244"/>
    </source>
</evidence>
<evidence type="ECO:0000250" key="3">
    <source>
        <dbReference type="UniProtKB" id="P68040"/>
    </source>
</evidence>
<evidence type="ECO:0000269" key="4">
    <source>
    </source>
</evidence>
<evidence type="ECO:0000269" key="5">
    <source>
    </source>
</evidence>
<evidence type="ECO:0000305" key="6"/>
<reference key="1">
    <citation type="journal article" date="1999" name="Biochim. Biophys. Acta">
        <title>Structure and genomic organization of porcine RACK1 gene.</title>
        <authorList>
            <person name="Chou Y.-C."/>
            <person name="Chou C.-C."/>
            <person name="Chen Y.-K."/>
            <person name="Tsai S."/>
            <person name="Hsieh F.M.J."/>
            <person name="Liu H.J."/>
            <person name="Hseu T.-H."/>
        </authorList>
    </citation>
    <scope>NUCLEOTIDE SEQUENCE [GENOMIC DNA / MRNA]</scope>
    <scope>TISSUE SPECIFICITY</scope>
    <source>
        <tissue>Spleen</tissue>
    </source>
</reference>
<reference key="2">
    <citation type="journal article" date="2010" name="PLoS ONE">
        <title>RACK1 associates with muscarinic receptors and regulates M(2) receptor trafficking.</title>
        <authorList>
            <person name="Reiner C.L."/>
            <person name="McCullar J.S."/>
            <person name="Kow R.L."/>
            <person name="Le J.H."/>
            <person name="Goodlett D.R."/>
            <person name="Nathanson N.M."/>
        </authorList>
    </citation>
    <scope>FUNCTION</scope>
    <scope>INTERACTION WITH CHRM2</scope>
</reference>
<comment type="function">
    <text evidence="2 3 5">Scaffolding protein involved in the recruitment, assembly and/or regulation of a variety of signaling molecules. Interacts with a wide variety of proteins and plays a role in many cellular processes. Component of the 40S ribosomal subunit involved in translational repression (By similarity). Involved in the initiation of the ribosome quality control (RQC), a pathway that takes place when a ribosome has stalled during translation, by promoting ubiquitination of a subset of 40S ribosomal subunits (By similarity). Binds to and stabilizes activated protein kinase C (PKC), increasing PKC-mediated phosphorylation. May recruit activated PKC to the ribosome, leading to phosphorylation of EIF6. Inhibits the activity of SRC kinases including SRC, LCK and YES1. Inhibits cell growth by prolonging the G0/G1 phase of the cell cycle. Enhances phosphorylation of BMAL1 by PRKCA and inhibits transcriptional activity of the BMAL1-CLOCK heterodimer. Facilitates ligand-independent nuclear translocation of AR following PKC activation, represses AR transactivation activity and is required for phosphorylation of AR by SRC. Modulates IGF1R-dependent integrin signaling and promotes cell spreading and contact with the extracellular matrix. Involved in PKC-dependent translocation of ADAM12 to the cell membrane. Promotes the ubiquitination and proteasome-mediated degradation of proteins such as CLEC1B and HIF1A. Required for VANGL2 membrane localization, inhibits Wnt signaling, and regulates cellular polarization and oriented cell division during gastrulation. Required for PTK2/FAK1 phosphorylation and dephosphorylation. Promotes apoptosis by increasing oligomerization of BAX and disrupting the interaction of BAX with the anti-apoptotic factor BCL2L. Inhibits TRPM6 channel activity. Regulates cell surface expression of some GPCRs such as TBXA2R. Plays a role in regulation of FLT1-mediated cell migration (By similarity). Regulates internalization of the muscarinic receptor CHRM2 (PubMed:20976005). Involved in the transport of ABCB4 from the Golgi to the apical bile canalicular membrane (By similarity). Acts as an adapter for the dephosphorylation and inactivation of AKT1 by promoting recruitment of PP2A phosphatase to AKT1 (By similarity).</text>
</comment>
<comment type="subunit">
    <text evidence="2 3 5">Monomer; also forms homodimers and homooligomersInteracts with CPNE3 (By similarity). May interact with ABCB4 (By similarity). Component of the small (40S) ribosomal subunit. Binds NHERF1. Forms a ternary complex with TRIM63 and PRKCE. Interacts with HABP4, KRT1 and OTUB1. Interacts with SRC (via SH2 domain); the interaction is enhanced by tyrosine phosphorylation of RACK1. Recruited in a circadian manner into a nuclear complex which also includes BMAL1 and PRKCA. Interacts with AR. Interacts with IGF1R but not with INSR. Interacts with ADAM12. Interacts with CLEC1B (via N-terminal region) and with HIF1A; the interaction promotes their degradation. Interacts with RHOA; this enhances RHOA activation and promotes cell migration. Interacts with TRPM6 (via kinase domain). Interacts with PTK2/FAK1; required for PTK2/FAK1 phosphorylation and dephosphorylation. Interacts with FLT1. Interacts with HRAS. Interacts with LARP4B. Interacts with PKD2L1 (By similarity). Interacts with CHRM2; the interaction regulates CHRM2 internalization. Interacts with SLC9A5; this interaction regulates SLC9A5 cell-surface targeting and SLC9A5 activity (By similarity). Interacts with SLC9A6; this interaction regulates the distribution of SLC9A6 between endosomes and the plasma membrane (By similarity). Interacts with AIM2; promoting association with PP2A phosphatase and dephosphorylation of AKT1 (By similarity).</text>
</comment>
<comment type="subcellular location">
    <subcellularLocation>
        <location evidence="2">Cell membrane</location>
        <topology evidence="2">Peripheral membrane protein</topology>
    </subcellularLocation>
    <subcellularLocation>
        <location evidence="2">Cytoplasm</location>
    </subcellularLocation>
    <subcellularLocation>
        <location evidence="2">Cytoplasm</location>
        <location evidence="2">Perinuclear region</location>
    </subcellularLocation>
    <subcellularLocation>
        <location evidence="2">Nucleus</location>
    </subcellularLocation>
    <subcellularLocation>
        <location evidence="3">Perikaryon</location>
    </subcellularLocation>
    <subcellularLocation>
        <location evidence="3">Cell projection</location>
        <location evidence="3">Dendrite</location>
    </subcellularLocation>
    <text evidence="2 3">Recruited to the plasma membrane through interaction with KRT1 which binds to membrane-bound ITGB1. Also associated with the membrane in oncogene-transformed cells. PKC activation induces translocation from the perinuclear region to the cell periphery (By similarity). In the brain, detected mainly in cell bodies and dendrites with little expression in axonal fibers or nuclei (By similarity).</text>
</comment>
<comment type="tissue specificity">
    <text evidence="4">Differentially expressed in various tissues, with highest expression observed in thymus, pituitary, spleen and liver, whereas there was no detectable expression in muscle.</text>
</comment>
<comment type="domain">
    <text evidence="2">The 7 WD repeats mediate protein-protein interactions with binding partners.</text>
</comment>
<comment type="PTM">
    <text evidence="1">Phosphorylated on Tyr-228 and/or Tyr-246 by SRC. This is required for binding to SRC (By similarity).</text>
</comment>
<comment type="similarity">
    <text evidence="6">Belongs to the WD repeat G protein beta family. Ribosomal protein RACK1 subfamily.</text>
</comment>
<feature type="chain" id="PRO_0000127733" description="Small ribosomal subunit protein RACK1">
    <location>
        <begin position="1"/>
        <end position="317"/>
    </location>
</feature>
<feature type="initiator methionine" description="Removed; alternate" evidence="2">
    <location>
        <position position="1"/>
    </location>
</feature>
<feature type="chain" id="PRO_0000424483" description="Small ribosomal subunit protein RACK1, N-terminally processed">
    <location>
        <begin position="2"/>
        <end position="317"/>
    </location>
</feature>
<feature type="repeat" description="WD 1">
    <location>
        <begin position="13"/>
        <end position="44"/>
    </location>
</feature>
<feature type="repeat" description="WD 2">
    <location>
        <begin position="61"/>
        <end position="91"/>
    </location>
</feature>
<feature type="repeat" description="WD 3">
    <location>
        <begin position="103"/>
        <end position="133"/>
    </location>
</feature>
<feature type="repeat" description="WD 4">
    <location>
        <begin position="146"/>
        <end position="178"/>
    </location>
</feature>
<feature type="repeat" description="WD 5">
    <location>
        <begin position="190"/>
        <end position="220"/>
    </location>
</feature>
<feature type="repeat" description="WD 6">
    <location>
        <begin position="231"/>
        <end position="260"/>
    </location>
</feature>
<feature type="repeat" description="WD 7">
    <location>
        <begin position="281"/>
        <end position="311"/>
    </location>
</feature>
<feature type="modified residue" description="N-acetylmethionine" evidence="2">
    <location>
        <position position="1"/>
    </location>
</feature>
<feature type="modified residue" description="N-acetylthreonine; in Guanine nucleotide-binding protein subunit beta-2-like 1, N-terminally processed" evidence="2">
    <location>
        <position position="2"/>
    </location>
</feature>
<feature type="modified residue" description="Phosphothreonine" evidence="2">
    <location>
        <position position="6"/>
    </location>
</feature>
<feature type="modified residue" description="Phosphothreonine" evidence="2">
    <location>
        <position position="10"/>
    </location>
</feature>
<feature type="modified residue" description="Phosphotyrosine; by ABL1" evidence="2">
    <location>
        <position position="52"/>
    </location>
</feature>
<feature type="modified residue" description="Phosphothreonine" evidence="2">
    <location>
        <position position="96"/>
    </location>
</feature>
<feature type="modified residue" description="N6-acetyllysine" evidence="2">
    <location>
        <position position="130"/>
    </location>
</feature>
<feature type="modified residue" description="N6-acetyllysine" evidence="3">
    <location>
        <position position="183"/>
    </location>
</feature>
<feature type="modified residue" description="Phosphotyrosine" evidence="2">
    <location>
        <position position="228"/>
    </location>
</feature>
<feature type="modified residue" description="Phosphoserine" evidence="2">
    <location>
        <position position="276"/>
    </location>
</feature>
<feature type="modified residue" description="Phosphothreonine" evidence="2">
    <location>
        <position position="277"/>
    </location>
</feature>
<feature type="modified residue" description="Phosphoserine" evidence="2">
    <location>
        <position position="278"/>
    </location>
</feature>
<feature type="modified residue" description="Phosphoserine" evidence="2">
    <location>
        <position position="279"/>
    </location>
</feature>
<feature type="modified residue" description="Phosphothreonine" evidence="3">
    <location>
        <position position="316"/>
    </location>
</feature>
<protein>
    <recommendedName>
        <fullName evidence="6">Small ribosomal subunit protein RACK1</fullName>
    </recommendedName>
    <alternativeName>
        <fullName>Guanine nucleotide-binding protein subunit beta-2-like 1</fullName>
    </alternativeName>
    <alternativeName>
        <fullName>Receptor for activated C kinase</fullName>
    </alternativeName>
    <alternativeName>
        <fullName>Receptor of activated protein C kinase 1</fullName>
    </alternativeName>
    <alternativeName>
        <fullName>Receptor of activated protein kinase C 1</fullName>
    </alternativeName>
    <component>
        <recommendedName>
            <fullName>Small ribosomal subunit protein RACK1, N-terminally processed</fullName>
        </recommendedName>
        <alternativeName>
            <fullName>Receptor of activated protein C kinase 1, N-terminally processed</fullName>
        </alternativeName>
    </component>
</protein>
<accession>P63246</accession>
<accession>P25388</accession>
<accession>P99049</accession>
<name>RACK1_PIG</name>
<dbReference type="EMBL" id="Z33879">
    <property type="protein sequence ID" value="CAA83944.1"/>
    <property type="molecule type" value="mRNA"/>
</dbReference>
<dbReference type="EMBL" id="AF146043">
    <property type="protein sequence ID" value="AAD37978.1"/>
    <property type="molecule type" value="Genomic_DNA"/>
</dbReference>
<dbReference type="PIR" id="S45054">
    <property type="entry name" value="S45054"/>
</dbReference>
<dbReference type="RefSeq" id="NP_999497.1">
    <property type="nucleotide sequence ID" value="NM_214332.1"/>
</dbReference>
<dbReference type="PDB" id="3J7P">
    <property type="method" value="EM"/>
    <property type="resolution" value="3.50 A"/>
    <property type="chains" value="Sg=1-317"/>
</dbReference>
<dbReference type="PDB" id="3J7R">
    <property type="method" value="EM"/>
    <property type="resolution" value="3.90 A"/>
    <property type="chains" value="Sg=1-317"/>
</dbReference>
<dbReference type="PDBsum" id="3J7P"/>
<dbReference type="PDBsum" id="3J7R"/>
<dbReference type="SMR" id="P63246"/>
<dbReference type="FunCoup" id="P63246">
    <property type="interactions" value="1872"/>
</dbReference>
<dbReference type="IntAct" id="P63246">
    <property type="interactions" value="2"/>
</dbReference>
<dbReference type="STRING" id="9823.ENSSSCP00000023723"/>
<dbReference type="PaxDb" id="9823-ENSSSCP00000023723"/>
<dbReference type="PeptideAtlas" id="P63246"/>
<dbReference type="Ensembl" id="ENSSSCT00000022602.4">
    <property type="protein sequence ID" value="ENSSSCP00000023723.2"/>
    <property type="gene ID" value="ENSSSCG00000029724.4"/>
</dbReference>
<dbReference type="Ensembl" id="ENSSSCT00015092717.1">
    <property type="protein sequence ID" value="ENSSSCP00015037908.1"/>
    <property type="gene ID" value="ENSSSCG00015067931.1"/>
</dbReference>
<dbReference type="Ensembl" id="ENSSSCT00025084487.1">
    <property type="protein sequence ID" value="ENSSSCP00025036753.1"/>
    <property type="gene ID" value="ENSSSCG00025061587.1"/>
</dbReference>
<dbReference type="Ensembl" id="ENSSSCT00030045369.1">
    <property type="protein sequence ID" value="ENSSSCP00030020404.1"/>
    <property type="gene ID" value="ENSSSCG00030032752.1"/>
</dbReference>
<dbReference type="Ensembl" id="ENSSSCT00035105457.1">
    <property type="protein sequence ID" value="ENSSSCP00035045285.1"/>
    <property type="gene ID" value="ENSSSCG00035076782.1"/>
</dbReference>
<dbReference type="Ensembl" id="ENSSSCT00040062588.1">
    <property type="protein sequence ID" value="ENSSSCP00040026390.1"/>
    <property type="gene ID" value="ENSSSCG00040046413.1"/>
</dbReference>
<dbReference type="Ensembl" id="ENSSSCT00045009969.1">
    <property type="protein sequence ID" value="ENSSSCP00045006795.1"/>
    <property type="gene ID" value="ENSSSCG00045005934.1"/>
</dbReference>
<dbReference type="Ensembl" id="ENSSSCT00050096955.1">
    <property type="protein sequence ID" value="ENSSSCP00050041781.1"/>
    <property type="gene ID" value="ENSSSCG00050071078.1"/>
</dbReference>
<dbReference type="Ensembl" id="ENSSSCT00055043778.1">
    <property type="protein sequence ID" value="ENSSSCP00055034861.1"/>
    <property type="gene ID" value="ENSSSCG00055022149.1"/>
</dbReference>
<dbReference type="Ensembl" id="ENSSSCT00060006171.1">
    <property type="protein sequence ID" value="ENSSSCP00060002097.1"/>
    <property type="gene ID" value="ENSSSCG00060004937.1"/>
</dbReference>
<dbReference type="Ensembl" id="ENSSSCT00065082735.1">
    <property type="protein sequence ID" value="ENSSSCP00065036048.1"/>
    <property type="gene ID" value="ENSSSCG00065060348.1"/>
</dbReference>
<dbReference type="Ensembl" id="ENSSSCT00070026581.1">
    <property type="protein sequence ID" value="ENSSSCP00070022091.1"/>
    <property type="gene ID" value="ENSSSCG00070013602.1"/>
</dbReference>
<dbReference type="Ensembl" id="ENSSSCT00105054765">
    <property type="protein sequence ID" value="ENSSSCP00105038514"/>
    <property type="gene ID" value="ENSSSCG00105028691"/>
</dbReference>
<dbReference type="Ensembl" id="ENSSSCT00110046793">
    <property type="protein sequence ID" value="ENSSSCP00110032875"/>
    <property type="gene ID" value="ENSSSCG00110024206"/>
</dbReference>
<dbReference type="Ensembl" id="ENSSSCT00115016985">
    <property type="protein sequence ID" value="ENSSSCP00115016037"/>
    <property type="gene ID" value="ENSSSCG00115009835"/>
</dbReference>
<dbReference type="Ensembl" id="ENSSSCT00130070670">
    <property type="protein sequence ID" value="ENSSSCP00130051020"/>
    <property type="gene ID" value="ENSSSCG00130036036"/>
</dbReference>
<dbReference type="GeneID" id="397605"/>
<dbReference type="KEGG" id="ssc:397605"/>
<dbReference type="CTD" id="10399"/>
<dbReference type="VGNC" id="VGNC:100848">
    <property type="gene designation" value="RACK1"/>
</dbReference>
<dbReference type="eggNOG" id="KOG0279">
    <property type="taxonomic scope" value="Eukaryota"/>
</dbReference>
<dbReference type="GeneTree" id="ENSGT00940000154461"/>
<dbReference type="InParanoid" id="P63246"/>
<dbReference type="OMA" id="NCKLKIN"/>
<dbReference type="OrthoDB" id="7875889at2759"/>
<dbReference type="Reactome" id="R-SSC-5357905">
    <property type="pathway name" value="Regulation of TNFR1 signaling"/>
</dbReference>
<dbReference type="Reactome" id="R-SSC-5357956">
    <property type="pathway name" value="TNFR1-induced NF-kappa-B signaling pathway"/>
</dbReference>
<dbReference type="Reactome" id="R-SSC-5626978">
    <property type="pathway name" value="TNFR1-mediated ceramide production"/>
</dbReference>
<dbReference type="Proteomes" id="UP000008227">
    <property type="component" value="Chromosome 2"/>
</dbReference>
<dbReference type="Proteomes" id="UP000314985">
    <property type="component" value="Chromosome 2"/>
</dbReference>
<dbReference type="Proteomes" id="UP000694570">
    <property type="component" value="Unplaced"/>
</dbReference>
<dbReference type="Proteomes" id="UP000694571">
    <property type="component" value="Unplaced"/>
</dbReference>
<dbReference type="Proteomes" id="UP000694720">
    <property type="component" value="Unplaced"/>
</dbReference>
<dbReference type="Proteomes" id="UP000694722">
    <property type="component" value="Unplaced"/>
</dbReference>
<dbReference type="Proteomes" id="UP000694723">
    <property type="component" value="Unplaced"/>
</dbReference>
<dbReference type="Proteomes" id="UP000694724">
    <property type="component" value="Unplaced"/>
</dbReference>
<dbReference type="Proteomes" id="UP000694725">
    <property type="component" value="Unplaced"/>
</dbReference>
<dbReference type="Proteomes" id="UP000694726">
    <property type="component" value="Unplaced"/>
</dbReference>
<dbReference type="Proteomes" id="UP000694727">
    <property type="component" value="Unplaced"/>
</dbReference>
<dbReference type="Proteomes" id="UP000694728">
    <property type="component" value="Unplaced"/>
</dbReference>
<dbReference type="Bgee" id="ENSSSCG00000029724">
    <property type="expression patterns" value="Expressed in blood and 46 other cell types or tissues"/>
</dbReference>
<dbReference type="ExpressionAtlas" id="P63246">
    <property type="expression patterns" value="baseline and differential"/>
</dbReference>
<dbReference type="GO" id="GO:0005737">
    <property type="term" value="C:cytoplasm"/>
    <property type="evidence" value="ECO:0000250"/>
    <property type="project" value="UniProtKB"/>
</dbReference>
<dbReference type="GO" id="GO:0005829">
    <property type="term" value="C:cytosol"/>
    <property type="evidence" value="ECO:0000318"/>
    <property type="project" value="GO_Central"/>
</dbReference>
<dbReference type="GO" id="GO:0030425">
    <property type="term" value="C:dendrite"/>
    <property type="evidence" value="ECO:0007669"/>
    <property type="project" value="UniProtKB-SubCell"/>
</dbReference>
<dbReference type="GO" id="GO:1990630">
    <property type="term" value="C:IRE1-RACK1-PP2A complex"/>
    <property type="evidence" value="ECO:0007669"/>
    <property type="project" value="Ensembl"/>
</dbReference>
<dbReference type="GO" id="GO:0030496">
    <property type="term" value="C:midbody"/>
    <property type="evidence" value="ECO:0000250"/>
    <property type="project" value="UniProtKB"/>
</dbReference>
<dbReference type="GO" id="GO:0005739">
    <property type="term" value="C:mitochondrion"/>
    <property type="evidence" value="ECO:0007669"/>
    <property type="project" value="Ensembl"/>
</dbReference>
<dbReference type="GO" id="GO:0043025">
    <property type="term" value="C:neuronal cell body"/>
    <property type="evidence" value="ECO:0000250"/>
    <property type="project" value="UniProtKB"/>
</dbReference>
<dbReference type="GO" id="GO:0005654">
    <property type="term" value="C:nucleoplasm"/>
    <property type="evidence" value="ECO:0007669"/>
    <property type="project" value="Ensembl"/>
</dbReference>
<dbReference type="GO" id="GO:0005634">
    <property type="term" value="C:nucleus"/>
    <property type="evidence" value="ECO:0000250"/>
    <property type="project" value="UniProtKB"/>
</dbReference>
<dbReference type="GO" id="GO:0043204">
    <property type="term" value="C:perikaryon"/>
    <property type="evidence" value="ECO:0007669"/>
    <property type="project" value="UniProtKB-SubCell"/>
</dbReference>
<dbReference type="GO" id="GO:0048471">
    <property type="term" value="C:perinuclear region of cytoplasm"/>
    <property type="evidence" value="ECO:0000250"/>
    <property type="project" value="UniProtKB"/>
</dbReference>
<dbReference type="GO" id="GO:0001891">
    <property type="term" value="C:phagocytic cup"/>
    <property type="evidence" value="ECO:0000250"/>
    <property type="project" value="UniProtKB"/>
</dbReference>
<dbReference type="GO" id="GO:1990904">
    <property type="term" value="C:ribonucleoprotein complex"/>
    <property type="evidence" value="ECO:0007669"/>
    <property type="project" value="UniProtKB-KW"/>
</dbReference>
<dbReference type="GO" id="GO:0005840">
    <property type="term" value="C:ribosome"/>
    <property type="evidence" value="ECO:0007669"/>
    <property type="project" value="UniProtKB-KW"/>
</dbReference>
<dbReference type="GO" id="GO:0051434">
    <property type="term" value="F:BH3 domain binding"/>
    <property type="evidence" value="ECO:0007669"/>
    <property type="project" value="Ensembl"/>
</dbReference>
<dbReference type="GO" id="GO:0030332">
    <property type="term" value="F:cyclin binding"/>
    <property type="evidence" value="ECO:0007669"/>
    <property type="project" value="Ensembl"/>
</dbReference>
<dbReference type="GO" id="GO:0008656">
    <property type="term" value="F:cysteine-type endopeptidase activator activity involved in apoptotic process"/>
    <property type="evidence" value="ECO:0007669"/>
    <property type="project" value="Ensembl"/>
</dbReference>
<dbReference type="GO" id="GO:0042803">
    <property type="term" value="F:protein homodimerization activity"/>
    <property type="evidence" value="ECO:0007669"/>
    <property type="project" value="Ensembl"/>
</dbReference>
<dbReference type="GO" id="GO:0005080">
    <property type="term" value="F:protein kinase C binding"/>
    <property type="evidence" value="ECO:0000250"/>
    <property type="project" value="UniProtKB"/>
</dbReference>
<dbReference type="GO" id="GO:0019903">
    <property type="term" value="F:protein phosphatase binding"/>
    <property type="evidence" value="ECO:0007669"/>
    <property type="project" value="Ensembl"/>
</dbReference>
<dbReference type="GO" id="GO:0030291">
    <property type="term" value="F:protein serine/threonine kinase inhibitor activity"/>
    <property type="evidence" value="ECO:0007669"/>
    <property type="project" value="Ensembl"/>
</dbReference>
<dbReference type="GO" id="GO:0030292">
    <property type="term" value="F:protein tyrosine kinase inhibitor activity"/>
    <property type="evidence" value="ECO:0000250"/>
    <property type="project" value="UniProtKB"/>
</dbReference>
<dbReference type="GO" id="GO:0030971">
    <property type="term" value="F:receptor tyrosine kinase binding"/>
    <property type="evidence" value="ECO:0000250"/>
    <property type="project" value="UniProtKB"/>
</dbReference>
<dbReference type="GO" id="GO:0043022">
    <property type="term" value="F:ribosome binding"/>
    <property type="evidence" value="ECO:0000250"/>
    <property type="project" value="UniProtKB"/>
</dbReference>
<dbReference type="GO" id="GO:0042169">
    <property type="term" value="F:SH2 domain binding"/>
    <property type="evidence" value="ECO:0000250"/>
    <property type="project" value="UniProtKB"/>
</dbReference>
<dbReference type="GO" id="GO:0035591">
    <property type="term" value="F:signaling adaptor activity"/>
    <property type="evidence" value="ECO:0007669"/>
    <property type="project" value="Ensembl"/>
</dbReference>
<dbReference type="GO" id="GO:0045182">
    <property type="term" value="F:translation regulator activity"/>
    <property type="evidence" value="ECO:0007669"/>
    <property type="project" value="InterPro"/>
</dbReference>
<dbReference type="GO" id="GO:0071333">
    <property type="term" value="P:cellular response to glucose stimulus"/>
    <property type="evidence" value="ECO:0007669"/>
    <property type="project" value="Ensembl"/>
</dbReference>
<dbReference type="GO" id="GO:0071363">
    <property type="term" value="P:cellular response to growth factor stimulus"/>
    <property type="evidence" value="ECO:0000250"/>
    <property type="project" value="UniProtKB"/>
</dbReference>
<dbReference type="GO" id="GO:0007369">
    <property type="term" value="P:gastrulation"/>
    <property type="evidence" value="ECO:0007669"/>
    <property type="project" value="UniProtKB-KW"/>
</dbReference>
<dbReference type="GO" id="GO:0030308">
    <property type="term" value="P:negative regulation of cell growth"/>
    <property type="evidence" value="ECO:0000250"/>
    <property type="project" value="UniProtKB"/>
</dbReference>
<dbReference type="GO" id="GO:1903751">
    <property type="term" value="P:negative regulation of intrinsic apoptotic signaling pathway in response to hydrogen peroxide"/>
    <property type="evidence" value="ECO:0007669"/>
    <property type="project" value="Ensembl"/>
</dbReference>
<dbReference type="GO" id="GO:0050765">
    <property type="term" value="P:negative regulation of phagocytosis"/>
    <property type="evidence" value="ECO:0000250"/>
    <property type="project" value="UniProtKB"/>
</dbReference>
<dbReference type="GO" id="GO:0051898">
    <property type="term" value="P:negative regulation of phosphatidylinositol 3-kinase/protein kinase B signal transduction"/>
    <property type="evidence" value="ECO:0007669"/>
    <property type="project" value="Ensembl"/>
</dbReference>
<dbReference type="GO" id="GO:0045879">
    <property type="term" value="P:negative regulation of smoothened signaling pathway"/>
    <property type="evidence" value="ECO:0007669"/>
    <property type="project" value="Ensembl"/>
</dbReference>
<dbReference type="GO" id="GO:2001125">
    <property type="term" value="P:negative regulation of translational frameshifting"/>
    <property type="evidence" value="ECO:0000318"/>
    <property type="project" value="GO_Central"/>
</dbReference>
<dbReference type="GO" id="GO:0030178">
    <property type="term" value="P:negative regulation of Wnt signaling pathway"/>
    <property type="evidence" value="ECO:0000250"/>
    <property type="project" value="UniProtKB"/>
</dbReference>
<dbReference type="GO" id="GO:0043065">
    <property type="term" value="P:positive regulation of apoptotic process"/>
    <property type="evidence" value="ECO:0000250"/>
    <property type="project" value="UniProtKB"/>
</dbReference>
<dbReference type="GO" id="GO:0030335">
    <property type="term" value="P:positive regulation of cell migration"/>
    <property type="evidence" value="ECO:0000250"/>
    <property type="project" value="UniProtKB"/>
</dbReference>
<dbReference type="GO" id="GO:2000543">
    <property type="term" value="P:positive regulation of gastrulation"/>
    <property type="evidence" value="ECO:0000250"/>
    <property type="project" value="UniProtKB"/>
</dbReference>
<dbReference type="GO" id="GO:0042998">
    <property type="term" value="P:positive regulation of Golgi to plasma membrane protein transport"/>
    <property type="evidence" value="ECO:0000250"/>
    <property type="project" value="UniProtKB"/>
</dbReference>
<dbReference type="GO" id="GO:0043547">
    <property type="term" value="P:positive regulation of GTPase activity"/>
    <property type="evidence" value="ECO:0000250"/>
    <property type="project" value="UniProtKB"/>
</dbReference>
<dbReference type="GO" id="GO:2001244">
    <property type="term" value="P:positive regulation of intrinsic apoptotic signaling pathway"/>
    <property type="evidence" value="ECO:0007669"/>
    <property type="project" value="Ensembl"/>
</dbReference>
<dbReference type="GO" id="GO:0051901">
    <property type="term" value="P:positive regulation of mitochondrial depolarization"/>
    <property type="evidence" value="ECO:0007669"/>
    <property type="project" value="Ensembl"/>
</dbReference>
<dbReference type="GO" id="GO:0032436">
    <property type="term" value="P:positive regulation of proteasomal ubiquitin-dependent protein catabolic process"/>
    <property type="evidence" value="ECO:0000250"/>
    <property type="project" value="UniProtKB"/>
</dbReference>
<dbReference type="GO" id="GO:0001934">
    <property type="term" value="P:positive regulation of protein phosphorylation"/>
    <property type="evidence" value="ECO:0000250"/>
    <property type="project" value="UniProtKB"/>
</dbReference>
<dbReference type="GO" id="GO:0031334">
    <property type="term" value="P:positive regulation of protein-containing complex assembly"/>
    <property type="evidence" value="ECO:0000250"/>
    <property type="project" value="UniProtKB"/>
</dbReference>
<dbReference type="GO" id="GO:0016567">
    <property type="term" value="P:protein ubiquitination"/>
    <property type="evidence" value="ECO:0000250"/>
    <property type="project" value="UniProtKB"/>
</dbReference>
<dbReference type="GO" id="GO:0106070">
    <property type="term" value="P:regulation of adenylate cyclase-activating G protein-coupled receptor signaling pathway"/>
    <property type="evidence" value="ECO:0007669"/>
    <property type="project" value="Ensembl"/>
</dbReference>
<dbReference type="GO" id="GO:0051726">
    <property type="term" value="P:regulation of cell cycle"/>
    <property type="evidence" value="ECO:0000250"/>
    <property type="project" value="UniProtKB"/>
</dbReference>
<dbReference type="GO" id="GO:0051302">
    <property type="term" value="P:regulation of cell division"/>
    <property type="evidence" value="ECO:0000250"/>
    <property type="project" value="UniProtKB"/>
</dbReference>
<dbReference type="GO" id="GO:2000114">
    <property type="term" value="P:regulation of establishment of cell polarity"/>
    <property type="evidence" value="ECO:0000250"/>
    <property type="project" value="UniProtKB"/>
</dbReference>
<dbReference type="GO" id="GO:0032880">
    <property type="term" value="P:regulation of protein localization"/>
    <property type="evidence" value="ECO:0000250"/>
    <property type="project" value="UniProtKB"/>
</dbReference>
<dbReference type="GO" id="GO:0072344">
    <property type="term" value="P:rescue of stalled ribosome"/>
    <property type="evidence" value="ECO:0000250"/>
    <property type="project" value="UniProtKB"/>
</dbReference>
<dbReference type="GO" id="GO:0048511">
    <property type="term" value="P:rhythmic process"/>
    <property type="evidence" value="ECO:0007669"/>
    <property type="project" value="UniProtKB-KW"/>
</dbReference>
<dbReference type="CDD" id="cd00200">
    <property type="entry name" value="WD40"/>
    <property type="match status" value="1"/>
</dbReference>
<dbReference type="FunFam" id="2.130.10.10:FF:001252">
    <property type="entry name" value="Receptor of activated protein C kinase 1"/>
    <property type="match status" value="1"/>
</dbReference>
<dbReference type="Gene3D" id="2.130.10.10">
    <property type="entry name" value="YVTN repeat-like/Quinoprotein amine dehydrogenase"/>
    <property type="match status" value="1"/>
</dbReference>
<dbReference type="InterPro" id="IPR020472">
    <property type="entry name" value="G-protein_beta_WD-40_rep"/>
</dbReference>
<dbReference type="InterPro" id="IPR045223">
    <property type="entry name" value="RACK1-like"/>
</dbReference>
<dbReference type="InterPro" id="IPR015943">
    <property type="entry name" value="WD40/YVTN_repeat-like_dom_sf"/>
</dbReference>
<dbReference type="InterPro" id="IPR019775">
    <property type="entry name" value="WD40_repeat_CS"/>
</dbReference>
<dbReference type="InterPro" id="IPR036322">
    <property type="entry name" value="WD40_repeat_dom_sf"/>
</dbReference>
<dbReference type="InterPro" id="IPR001680">
    <property type="entry name" value="WD40_rpt"/>
</dbReference>
<dbReference type="PANTHER" id="PTHR19868">
    <property type="entry name" value="RECEPTOR FOR ACTIVATED PROTEIN KINASE C RACK1"/>
    <property type="match status" value="1"/>
</dbReference>
<dbReference type="Pfam" id="PF00400">
    <property type="entry name" value="WD40"/>
    <property type="match status" value="7"/>
</dbReference>
<dbReference type="PRINTS" id="PR00320">
    <property type="entry name" value="GPROTEINBRPT"/>
</dbReference>
<dbReference type="SMART" id="SM00320">
    <property type="entry name" value="WD40"/>
    <property type="match status" value="7"/>
</dbReference>
<dbReference type="SUPFAM" id="SSF50978">
    <property type="entry name" value="WD40 repeat-like"/>
    <property type="match status" value="1"/>
</dbReference>
<dbReference type="PROSITE" id="PS00678">
    <property type="entry name" value="WD_REPEATS_1"/>
    <property type="match status" value="4"/>
</dbReference>
<dbReference type="PROSITE" id="PS50082">
    <property type="entry name" value="WD_REPEATS_2"/>
    <property type="match status" value="6"/>
</dbReference>
<dbReference type="PROSITE" id="PS50294">
    <property type="entry name" value="WD_REPEATS_REGION"/>
    <property type="match status" value="1"/>
</dbReference>
<organism>
    <name type="scientific">Sus scrofa</name>
    <name type="common">Pig</name>
    <dbReference type="NCBI Taxonomy" id="9823"/>
    <lineage>
        <taxon>Eukaryota</taxon>
        <taxon>Metazoa</taxon>
        <taxon>Chordata</taxon>
        <taxon>Craniata</taxon>
        <taxon>Vertebrata</taxon>
        <taxon>Euteleostomi</taxon>
        <taxon>Mammalia</taxon>
        <taxon>Eutheria</taxon>
        <taxon>Laurasiatheria</taxon>
        <taxon>Artiodactyla</taxon>
        <taxon>Suina</taxon>
        <taxon>Suidae</taxon>
        <taxon>Sus</taxon>
    </lineage>
</organism>